<accession>B1H0H0</accession>
<reference key="1">
    <citation type="journal article" date="2008" name="Proc. Natl. Acad. Sci. U.S.A.">
        <title>Complete genome of the uncultured termite group 1 bacteria in a single host protist cell.</title>
        <authorList>
            <person name="Hongoh Y."/>
            <person name="Sharma V.K."/>
            <person name="Prakash T."/>
            <person name="Noda S."/>
            <person name="Taylor T.D."/>
            <person name="Kudo T."/>
            <person name="Sakaki Y."/>
            <person name="Toyoda A."/>
            <person name="Hattori M."/>
            <person name="Ohkuma M."/>
        </authorList>
    </citation>
    <scope>NUCLEOTIDE SEQUENCE [LARGE SCALE GENOMIC DNA]</scope>
</reference>
<organism>
    <name type="scientific">Endomicrobium trichonymphae</name>
    <dbReference type="NCBI Taxonomy" id="1408204"/>
    <lineage>
        <taxon>Bacteria</taxon>
        <taxon>Pseudomonadati</taxon>
        <taxon>Elusimicrobiota</taxon>
        <taxon>Endomicrobiia</taxon>
        <taxon>Endomicrobiales</taxon>
        <taxon>Endomicrobiaceae</taxon>
        <taxon>Candidatus Endomicrobiellum</taxon>
    </lineage>
</organism>
<evidence type="ECO:0000255" key="1">
    <source>
        <dbReference type="HAMAP-Rule" id="MF_00632"/>
    </source>
</evidence>
<sequence length="165" mass="18975">MADKFSFDIVSEVNMMEVDNAVNQARKELANRFDFKDSKSSIELNKKDKKITLIADNEYKMKALKDILEGRFAKRNVSIKSLDYKVQENAFEGYIRQTAEIISGLSSDRAKELSKLIRDSKIKVQAQIDGTKIKVISTKKDDLQLVIAYLKQLSFPLPLQFTNYR</sequence>
<protein>
    <recommendedName>
        <fullName evidence="1">Nucleotide-binding protein TGRD_519</fullName>
    </recommendedName>
</protein>
<gene>
    <name type="ordered locus">TGRD_519</name>
</gene>
<feature type="chain" id="PRO_1000147331" description="Nucleotide-binding protein TGRD_519">
    <location>
        <begin position="1"/>
        <end position="165"/>
    </location>
</feature>
<dbReference type="EMBL" id="AP009510">
    <property type="protein sequence ID" value="BAG14002.1"/>
    <property type="molecule type" value="Genomic_DNA"/>
</dbReference>
<dbReference type="RefSeq" id="WP_015423527.1">
    <property type="nucleotide sequence ID" value="NC_020419.1"/>
</dbReference>
<dbReference type="SMR" id="B1H0H0"/>
<dbReference type="STRING" id="471821.TGRD_519"/>
<dbReference type="KEGG" id="eti:RSTT_486"/>
<dbReference type="KEGG" id="rsd:TGRD_519"/>
<dbReference type="PATRIC" id="fig|471821.5.peg.851"/>
<dbReference type="HOGENOM" id="CLU_099839_1_0_0"/>
<dbReference type="OrthoDB" id="9801447at2"/>
<dbReference type="Proteomes" id="UP000001691">
    <property type="component" value="Chromosome"/>
</dbReference>
<dbReference type="GO" id="GO:0005829">
    <property type="term" value="C:cytosol"/>
    <property type="evidence" value="ECO:0007669"/>
    <property type="project" value="TreeGrafter"/>
</dbReference>
<dbReference type="GO" id="GO:0000166">
    <property type="term" value="F:nucleotide binding"/>
    <property type="evidence" value="ECO:0007669"/>
    <property type="project" value="TreeGrafter"/>
</dbReference>
<dbReference type="CDD" id="cd11740">
    <property type="entry name" value="YajQ_like"/>
    <property type="match status" value="1"/>
</dbReference>
<dbReference type="Gene3D" id="3.30.70.860">
    <property type="match status" value="1"/>
</dbReference>
<dbReference type="Gene3D" id="3.30.70.990">
    <property type="entry name" value="YajQ-like, domain 2"/>
    <property type="match status" value="1"/>
</dbReference>
<dbReference type="HAMAP" id="MF_00632">
    <property type="entry name" value="YajQ"/>
    <property type="match status" value="1"/>
</dbReference>
<dbReference type="InterPro" id="IPR007551">
    <property type="entry name" value="DUF520"/>
</dbReference>
<dbReference type="InterPro" id="IPR035571">
    <property type="entry name" value="UPF0234-like_C"/>
</dbReference>
<dbReference type="InterPro" id="IPR035570">
    <property type="entry name" value="UPF0234_N"/>
</dbReference>
<dbReference type="InterPro" id="IPR036183">
    <property type="entry name" value="YajQ-like_sf"/>
</dbReference>
<dbReference type="NCBIfam" id="NF003819">
    <property type="entry name" value="PRK05412.1"/>
    <property type="match status" value="1"/>
</dbReference>
<dbReference type="PANTHER" id="PTHR30476">
    <property type="entry name" value="UPF0234 PROTEIN YAJQ"/>
    <property type="match status" value="1"/>
</dbReference>
<dbReference type="PANTHER" id="PTHR30476:SF0">
    <property type="entry name" value="UPF0234 PROTEIN YAJQ"/>
    <property type="match status" value="1"/>
</dbReference>
<dbReference type="Pfam" id="PF04461">
    <property type="entry name" value="DUF520"/>
    <property type="match status" value="1"/>
</dbReference>
<dbReference type="SUPFAM" id="SSF89963">
    <property type="entry name" value="YajQ-like"/>
    <property type="match status" value="2"/>
</dbReference>
<proteinExistence type="inferred from homology"/>
<comment type="function">
    <text evidence="1">Nucleotide-binding protein.</text>
</comment>
<comment type="similarity">
    <text evidence="1">Belongs to the YajQ family.</text>
</comment>
<keyword id="KW-0547">Nucleotide-binding</keyword>
<name>Y519_ENDTX</name>